<gene>
    <name evidence="1" type="primary">psbF</name>
</gene>
<name>PSBF_OLTVI</name>
<accession>Q20EW3</accession>
<protein>
    <recommendedName>
        <fullName evidence="1">Cytochrome b559 subunit beta</fullName>
    </recommendedName>
    <alternativeName>
        <fullName evidence="1">PSII reaction center subunit VI</fullName>
    </alternativeName>
</protein>
<feature type="chain" id="PRO_0000275734" description="Cytochrome b559 subunit beta">
    <location>
        <begin position="1"/>
        <end position="41"/>
    </location>
</feature>
<feature type="transmembrane region" description="Helical" evidence="1">
    <location>
        <begin position="16"/>
        <end position="32"/>
    </location>
</feature>
<feature type="binding site" description="axial binding residue" evidence="1">
    <location>
        <position position="20"/>
    </location>
    <ligand>
        <name>heme</name>
        <dbReference type="ChEBI" id="CHEBI:30413"/>
        <note>ligand shared with alpha subunit</note>
    </ligand>
    <ligandPart>
        <name>Fe</name>
        <dbReference type="ChEBI" id="CHEBI:18248"/>
    </ligandPart>
</feature>
<organism>
    <name type="scientific">Oltmannsiellopsis viridis</name>
    <name type="common">Marine flagellate</name>
    <name type="synonym">Oltmannsiella viridis</name>
    <dbReference type="NCBI Taxonomy" id="51324"/>
    <lineage>
        <taxon>Eukaryota</taxon>
        <taxon>Viridiplantae</taxon>
        <taxon>Chlorophyta</taxon>
        <taxon>Ulvophyceae</taxon>
        <taxon>Oltmannsiellopsidales</taxon>
        <taxon>Oltmannsiellopsidaceae</taxon>
        <taxon>Oltmannsiellopsis</taxon>
    </lineage>
</organism>
<reference key="1">
    <citation type="journal article" date="2006" name="BMC Biol.">
        <title>The complete chloroplast DNA sequence of the green alga Oltmannsiellopsis viridis reveals a distinctive quadripartite architecture in the chloroplast genome of early diverging ulvophytes.</title>
        <authorList>
            <person name="Pombert J.-F."/>
            <person name="Lemieux C."/>
            <person name="Turmel M."/>
        </authorList>
    </citation>
    <scope>NUCLEOTIDE SEQUENCE [LARGE SCALE GENOMIC DNA]</scope>
</reference>
<geneLocation type="chloroplast"/>
<dbReference type="EMBL" id="DQ291132">
    <property type="protein sequence ID" value="ABB81950.1"/>
    <property type="molecule type" value="Genomic_DNA"/>
</dbReference>
<dbReference type="RefSeq" id="YP_635882.1">
    <property type="nucleotide sequence ID" value="NC_008099.1"/>
</dbReference>
<dbReference type="SMR" id="Q20EW3"/>
<dbReference type="GeneID" id="4100129"/>
<dbReference type="GO" id="GO:0009535">
    <property type="term" value="C:chloroplast thylakoid membrane"/>
    <property type="evidence" value="ECO:0007669"/>
    <property type="project" value="UniProtKB-SubCell"/>
</dbReference>
<dbReference type="GO" id="GO:0009539">
    <property type="term" value="C:photosystem II reaction center"/>
    <property type="evidence" value="ECO:0007669"/>
    <property type="project" value="InterPro"/>
</dbReference>
<dbReference type="GO" id="GO:0009055">
    <property type="term" value="F:electron transfer activity"/>
    <property type="evidence" value="ECO:0007669"/>
    <property type="project" value="UniProtKB-UniRule"/>
</dbReference>
<dbReference type="GO" id="GO:0020037">
    <property type="term" value="F:heme binding"/>
    <property type="evidence" value="ECO:0007669"/>
    <property type="project" value="InterPro"/>
</dbReference>
<dbReference type="GO" id="GO:0005506">
    <property type="term" value="F:iron ion binding"/>
    <property type="evidence" value="ECO:0007669"/>
    <property type="project" value="UniProtKB-UniRule"/>
</dbReference>
<dbReference type="GO" id="GO:0009767">
    <property type="term" value="P:photosynthetic electron transport chain"/>
    <property type="evidence" value="ECO:0007669"/>
    <property type="project" value="InterPro"/>
</dbReference>
<dbReference type="HAMAP" id="MF_00643">
    <property type="entry name" value="PSII_PsbF"/>
    <property type="match status" value="1"/>
</dbReference>
<dbReference type="InterPro" id="IPR006241">
    <property type="entry name" value="PSII_cyt_b559_bsu"/>
</dbReference>
<dbReference type="InterPro" id="IPR006216">
    <property type="entry name" value="PSII_cyt_b559_CS"/>
</dbReference>
<dbReference type="InterPro" id="IPR013081">
    <property type="entry name" value="PSII_cyt_b559_N"/>
</dbReference>
<dbReference type="NCBIfam" id="TIGR01333">
    <property type="entry name" value="cyt_b559_beta"/>
    <property type="match status" value="1"/>
</dbReference>
<dbReference type="Pfam" id="PF00283">
    <property type="entry name" value="Cytochrom_B559"/>
    <property type="match status" value="1"/>
</dbReference>
<dbReference type="PIRSF" id="PIRSF000037">
    <property type="entry name" value="PsbF"/>
    <property type="match status" value="1"/>
</dbReference>
<dbReference type="SUPFAM" id="SSF161045">
    <property type="entry name" value="Cytochrome b559 subunits"/>
    <property type="match status" value="1"/>
</dbReference>
<dbReference type="PROSITE" id="PS00537">
    <property type="entry name" value="CYTOCHROME_B559"/>
    <property type="match status" value="1"/>
</dbReference>
<sequence>MANQKTYTYPIFTVRWLAIHALAVPTVFFLGSITAMQFIER</sequence>
<evidence type="ECO:0000255" key="1">
    <source>
        <dbReference type="HAMAP-Rule" id="MF_00643"/>
    </source>
</evidence>
<keyword id="KW-0150">Chloroplast</keyword>
<keyword id="KW-0249">Electron transport</keyword>
<keyword id="KW-0349">Heme</keyword>
<keyword id="KW-0408">Iron</keyword>
<keyword id="KW-0472">Membrane</keyword>
<keyword id="KW-0479">Metal-binding</keyword>
<keyword id="KW-0602">Photosynthesis</keyword>
<keyword id="KW-0604">Photosystem II</keyword>
<keyword id="KW-0934">Plastid</keyword>
<keyword id="KW-0793">Thylakoid</keyword>
<keyword id="KW-0812">Transmembrane</keyword>
<keyword id="KW-1133">Transmembrane helix</keyword>
<keyword id="KW-0813">Transport</keyword>
<comment type="function">
    <text evidence="1">This b-type cytochrome is tightly associated with the reaction center of photosystem II (PSII). PSII is a light-driven water:plastoquinone oxidoreductase that uses light energy to abstract electrons from H(2)O, generating O(2) and a proton gradient subsequently used for ATP formation. It consists of a core antenna complex that captures photons, and an electron transfer chain that converts photonic excitation into a charge separation.</text>
</comment>
<comment type="cofactor">
    <cofactor evidence="1">
        <name>heme b</name>
        <dbReference type="ChEBI" id="CHEBI:60344"/>
    </cofactor>
    <text evidence="1">With its partner (PsbE) binds heme. PSII binds additional chlorophylls, carotenoids and specific lipids.</text>
</comment>
<comment type="subunit">
    <text evidence="1">Heterodimer of an alpha subunit and a beta subunit. PSII is composed of 1 copy each of membrane proteins PsbA, PsbB, PsbC, PsbD, PsbE, PsbF, PsbH, PsbI, PsbJ, PsbK, PsbL, PsbM, PsbT, PsbX, PsbY, PsbZ, Psb30/Ycf12, at least 3 peripheral proteins of the oxygen-evolving complex and a large number of cofactors. It forms dimeric complexes.</text>
</comment>
<comment type="subcellular location">
    <subcellularLocation>
        <location evidence="1">Plastid</location>
        <location evidence="1">Chloroplast thylakoid membrane</location>
        <topology evidence="1">Single-pass membrane protein</topology>
    </subcellularLocation>
</comment>
<comment type="similarity">
    <text evidence="1">Belongs to the PsbE/PsbF family.</text>
</comment>
<proteinExistence type="inferred from homology"/>